<dbReference type="EC" id="6.1.1.9" evidence="1"/>
<dbReference type="EMBL" id="CR522870">
    <property type="protein sequence ID" value="CAG36525.1"/>
    <property type="molecule type" value="Genomic_DNA"/>
</dbReference>
<dbReference type="RefSeq" id="WP_011189037.1">
    <property type="nucleotide sequence ID" value="NC_006138.1"/>
</dbReference>
<dbReference type="SMR" id="Q6AMA0"/>
<dbReference type="STRING" id="177439.DP1796"/>
<dbReference type="KEGG" id="dps:DP1796"/>
<dbReference type="eggNOG" id="COG0525">
    <property type="taxonomic scope" value="Bacteria"/>
</dbReference>
<dbReference type="HOGENOM" id="CLU_001493_0_2_7"/>
<dbReference type="OrthoDB" id="9810365at2"/>
<dbReference type="Proteomes" id="UP000000602">
    <property type="component" value="Chromosome"/>
</dbReference>
<dbReference type="GO" id="GO:0005829">
    <property type="term" value="C:cytosol"/>
    <property type="evidence" value="ECO:0007669"/>
    <property type="project" value="TreeGrafter"/>
</dbReference>
<dbReference type="GO" id="GO:0002161">
    <property type="term" value="F:aminoacyl-tRNA deacylase activity"/>
    <property type="evidence" value="ECO:0007669"/>
    <property type="project" value="InterPro"/>
</dbReference>
<dbReference type="GO" id="GO:0005524">
    <property type="term" value="F:ATP binding"/>
    <property type="evidence" value="ECO:0007669"/>
    <property type="project" value="UniProtKB-UniRule"/>
</dbReference>
<dbReference type="GO" id="GO:0004832">
    <property type="term" value="F:valine-tRNA ligase activity"/>
    <property type="evidence" value="ECO:0007669"/>
    <property type="project" value="UniProtKB-UniRule"/>
</dbReference>
<dbReference type="GO" id="GO:0006438">
    <property type="term" value="P:valyl-tRNA aminoacylation"/>
    <property type="evidence" value="ECO:0007669"/>
    <property type="project" value="UniProtKB-UniRule"/>
</dbReference>
<dbReference type="CDD" id="cd07962">
    <property type="entry name" value="Anticodon_Ia_Val"/>
    <property type="match status" value="1"/>
</dbReference>
<dbReference type="CDD" id="cd00817">
    <property type="entry name" value="ValRS_core"/>
    <property type="match status" value="1"/>
</dbReference>
<dbReference type="FunFam" id="1.10.287.380:FF:000001">
    <property type="entry name" value="Valine--tRNA ligase"/>
    <property type="match status" value="1"/>
</dbReference>
<dbReference type="FunFam" id="1.10.730.10:FF:000014">
    <property type="entry name" value="Valine--tRNA ligase"/>
    <property type="match status" value="1"/>
</dbReference>
<dbReference type="FunFam" id="3.40.50.620:FF:000032">
    <property type="entry name" value="Valine--tRNA ligase"/>
    <property type="match status" value="1"/>
</dbReference>
<dbReference type="FunFam" id="3.40.50.620:FF:000098">
    <property type="entry name" value="Valine--tRNA ligase"/>
    <property type="match status" value="1"/>
</dbReference>
<dbReference type="FunFam" id="3.90.740.10:FF:000005">
    <property type="entry name" value="Valine--tRNA ligase, mitochondrial"/>
    <property type="match status" value="1"/>
</dbReference>
<dbReference type="Gene3D" id="3.40.50.620">
    <property type="entry name" value="HUPs"/>
    <property type="match status" value="3"/>
</dbReference>
<dbReference type="Gene3D" id="1.10.730.10">
    <property type="entry name" value="Isoleucyl-tRNA Synthetase, Domain 1"/>
    <property type="match status" value="1"/>
</dbReference>
<dbReference type="Gene3D" id="1.10.287.380">
    <property type="entry name" value="Valyl-tRNA synthetase, C-terminal domain"/>
    <property type="match status" value="1"/>
</dbReference>
<dbReference type="Gene3D" id="3.90.740.10">
    <property type="entry name" value="Valyl/Leucyl/Isoleucyl-tRNA synthetase, editing domain"/>
    <property type="match status" value="1"/>
</dbReference>
<dbReference type="HAMAP" id="MF_02004">
    <property type="entry name" value="Val_tRNA_synth_type1"/>
    <property type="match status" value="1"/>
</dbReference>
<dbReference type="InterPro" id="IPR001412">
    <property type="entry name" value="aa-tRNA-synth_I_CS"/>
</dbReference>
<dbReference type="InterPro" id="IPR002300">
    <property type="entry name" value="aa-tRNA-synth_Ia"/>
</dbReference>
<dbReference type="InterPro" id="IPR033705">
    <property type="entry name" value="Anticodon_Ia_Val"/>
</dbReference>
<dbReference type="InterPro" id="IPR013155">
    <property type="entry name" value="M/V/L/I-tRNA-synth_anticd-bd"/>
</dbReference>
<dbReference type="InterPro" id="IPR014729">
    <property type="entry name" value="Rossmann-like_a/b/a_fold"/>
</dbReference>
<dbReference type="InterPro" id="IPR010978">
    <property type="entry name" value="tRNA-bd_arm"/>
</dbReference>
<dbReference type="InterPro" id="IPR009080">
    <property type="entry name" value="tRNAsynth_Ia_anticodon-bd"/>
</dbReference>
<dbReference type="InterPro" id="IPR037118">
    <property type="entry name" value="Val-tRNA_synth_C_sf"/>
</dbReference>
<dbReference type="InterPro" id="IPR019499">
    <property type="entry name" value="Val-tRNA_synth_tRNA-bd"/>
</dbReference>
<dbReference type="InterPro" id="IPR009008">
    <property type="entry name" value="Val/Leu/Ile-tRNA-synth_edit"/>
</dbReference>
<dbReference type="InterPro" id="IPR002303">
    <property type="entry name" value="Valyl-tRNA_ligase"/>
</dbReference>
<dbReference type="NCBIfam" id="NF004349">
    <property type="entry name" value="PRK05729.1"/>
    <property type="match status" value="1"/>
</dbReference>
<dbReference type="NCBIfam" id="TIGR00422">
    <property type="entry name" value="valS"/>
    <property type="match status" value="1"/>
</dbReference>
<dbReference type="PANTHER" id="PTHR11946:SF93">
    <property type="entry name" value="VALINE--TRNA LIGASE, CHLOROPLASTIC_MITOCHONDRIAL 2"/>
    <property type="match status" value="1"/>
</dbReference>
<dbReference type="PANTHER" id="PTHR11946">
    <property type="entry name" value="VALYL-TRNA SYNTHETASES"/>
    <property type="match status" value="1"/>
</dbReference>
<dbReference type="Pfam" id="PF08264">
    <property type="entry name" value="Anticodon_1"/>
    <property type="match status" value="1"/>
</dbReference>
<dbReference type="Pfam" id="PF00133">
    <property type="entry name" value="tRNA-synt_1"/>
    <property type="match status" value="1"/>
</dbReference>
<dbReference type="Pfam" id="PF10458">
    <property type="entry name" value="Val_tRNA-synt_C"/>
    <property type="match status" value="1"/>
</dbReference>
<dbReference type="PRINTS" id="PR00986">
    <property type="entry name" value="TRNASYNTHVAL"/>
</dbReference>
<dbReference type="SUPFAM" id="SSF47323">
    <property type="entry name" value="Anticodon-binding domain of a subclass of class I aminoacyl-tRNA synthetases"/>
    <property type="match status" value="1"/>
</dbReference>
<dbReference type="SUPFAM" id="SSF52374">
    <property type="entry name" value="Nucleotidylyl transferase"/>
    <property type="match status" value="1"/>
</dbReference>
<dbReference type="SUPFAM" id="SSF46589">
    <property type="entry name" value="tRNA-binding arm"/>
    <property type="match status" value="1"/>
</dbReference>
<dbReference type="SUPFAM" id="SSF50677">
    <property type="entry name" value="ValRS/IleRS/LeuRS editing domain"/>
    <property type="match status" value="1"/>
</dbReference>
<dbReference type="PROSITE" id="PS00178">
    <property type="entry name" value="AA_TRNA_LIGASE_I"/>
    <property type="match status" value="1"/>
</dbReference>
<organism>
    <name type="scientific">Desulfotalea psychrophila (strain LSv54 / DSM 12343)</name>
    <dbReference type="NCBI Taxonomy" id="177439"/>
    <lineage>
        <taxon>Bacteria</taxon>
        <taxon>Pseudomonadati</taxon>
        <taxon>Thermodesulfobacteriota</taxon>
        <taxon>Desulfobulbia</taxon>
        <taxon>Desulfobulbales</taxon>
        <taxon>Desulfocapsaceae</taxon>
        <taxon>Desulfotalea</taxon>
    </lineage>
</organism>
<name>SYV_DESPS</name>
<evidence type="ECO:0000255" key="1">
    <source>
        <dbReference type="HAMAP-Rule" id="MF_02004"/>
    </source>
</evidence>
<keyword id="KW-0030">Aminoacyl-tRNA synthetase</keyword>
<keyword id="KW-0067">ATP-binding</keyword>
<keyword id="KW-0175">Coiled coil</keyword>
<keyword id="KW-0963">Cytoplasm</keyword>
<keyword id="KW-0436">Ligase</keyword>
<keyword id="KW-0547">Nucleotide-binding</keyword>
<keyword id="KW-0648">Protein biosynthesis</keyword>
<keyword id="KW-1185">Reference proteome</keyword>
<gene>
    <name evidence="1" type="primary">valS</name>
    <name type="ordered locus">DP1796</name>
</gene>
<comment type="function">
    <text evidence="1">Catalyzes the attachment of valine to tRNA(Val). As ValRS can inadvertently accommodate and process structurally similar amino acids such as threonine, to avoid such errors, it has a 'posttransfer' editing activity that hydrolyzes mischarged Thr-tRNA(Val) in a tRNA-dependent manner.</text>
</comment>
<comment type="catalytic activity">
    <reaction evidence="1">
        <text>tRNA(Val) + L-valine + ATP = L-valyl-tRNA(Val) + AMP + diphosphate</text>
        <dbReference type="Rhea" id="RHEA:10704"/>
        <dbReference type="Rhea" id="RHEA-COMP:9672"/>
        <dbReference type="Rhea" id="RHEA-COMP:9708"/>
        <dbReference type="ChEBI" id="CHEBI:30616"/>
        <dbReference type="ChEBI" id="CHEBI:33019"/>
        <dbReference type="ChEBI" id="CHEBI:57762"/>
        <dbReference type="ChEBI" id="CHEBI:78442"/>
        <dbReference type="ChEBI" id="CHEBI:78537"/>
        <dbReference type="ChEBI" id="CHEBI:456215"/>
        <dbReference type="EC" id="6.1.1.9"/>
    </reaction>
</comment>
<comment type="subunit">
    <text evidence="1">Monomer.</text>
</comment>
<comment type="subcellular location">
    <subcellularLocation>
        <location evidence="1">Cytoplasm</location>
    </subcellularLocation>
</comment>
<comment type="domain">
    <text evidence="1">ValRS has two distinct active sites: one for aminoacylation and one for editing. The misactivated threonine is translocated from the active site to the editing site.</text>
</comment>
<comment type="domain">
    <text evidence="1">The C-terminal coiled-coil domain is crucial for aminoacylation activity.</text>
</comment>
<comment type="similarity">
    <text evidence="1">Belongs to the class-I aminoacyl-tRNA synthetase family. ValS type 1 subfamily.</text>
</comment>
<accession>Q6AMA0</accession>
<proteinExistence type="inferred from homology"/>
<protein>
    <recommendedName>
        <fullName evidence="1">Valine--tRNA ligase</fullName>
        <ecNumber evidence="1">6.1.1.9</ecNumber>
    </recommendedName>
    <alternativeName>
        <fullName evidence="1">Valyl-tRNA synthetase</fullName>
        <shortName evidence="1">ValRS</shortName>
    </alternativeName>
</protein>
<sequence>MAQDSLLSKGYEFADVEEKWLSRWHKQNAFATKMEDGKDAFSIVIPPPNVTGVLHVGHALNNTLQDILVRYHRMCGDNTMWIPGTDHAGIATQNVVERQLATEGKGRHDLGREAFIERVWKWREDKGGTIVNQLKKIGSSCDWERERFTMDEGLSTSVREVFVRLYKEGLIYKGDYIVNWCPRCQTALADDEVEHEDSKGKLYHIRYPFADGSGSVVIATTRPETMPGDTAIAVHPDDERYAHLGEIGIKLPLTDRILPVVFDHHVEKDFGTGALKVTPSHDRNDYEIGIRHGLDLCKVIDEKGMMNDNAGKYAGLDRFECRKQIVEDLREQGYLVEIEDYDHAVGHCYRCKTVIEPTTSLQWFVSVKPLAAKAVDAVRDGQINIYPKTWYNTFYSWMDNIRDWCISRQIWWGHRIPAWSCADCGELIVETEDPTSCPKCGSSKLSQETDVLDTWFSSALWPFSTMGWPENTKELQTFYPTSVLITSFDILFFWVARMMMMGLHLMDEVPFKDVYLHALVRDKHGKKMSKSTGNVIDPLEIMAQYGTDSMRFTLTAFAAQGREIKLDEDRIEGYRHFINKIWNAARFAQMHIGDCDDSIRVAVETPKDLALGHRWILSRTAKLVEGIHRSLRGYLFNEVASLNYQFIWKEFCDWYLEWIKSDLFSDDLVARDQARGCLMVVLETILKTLHPITPFVTEEIWSVLPGERGFLATSAFPEVREEWKDEEAEAEMELLMGIITGIRNIRSEAEVHPSTKINATVICHDSKRADIIRSYTSGISDMTRLEGFTVVAEAEKPADAATYIYNDIEIFVPLAGLVDIEAELEKLSRERKKVEAKLKQINGKLGNAKFLAGAPEAVVAKVTGEKEELDAKLAKIDEASDRLKKLS</sequence>
<feature type="chain" id="PRO_0000224473" description="Valine--tRNA ligase">
    <location>
        <begin position="1"/>
        <end position="887"/>
    </location>
</feature>
<feature type="coiled-coil region" evidence="1">
    <location>
        <begin position="814"/>
        <end position="887"/>
    </location>
</feature>
<feature type="short sequence motif" description="'HIGH' region">
    <location>
        <begin position="48"/>
        <end position="58"/>
    </location>
</feature>
<feature type="short sequence motif" description="'KMSKS' region">
    <location>
        <begin position="527"/>
        <end position="531"/>
    </location>
</feature>
<feature type="binding site" evidence="1">
    <location>
        <position position="530"/>
    </location>
    <ligand>
        <name>ATP</name>
        <dbReference type="ChEBI" id="CHEBI:30616"/>
    </ligand>
</feature>
<reference key="1">
    <citation type="journal article" date="2004" name="Environ. Microbiol.">
        <title>The genome of Desulfotalea psychrophila, a sulfate-reducing bacterium from permanently cold Arctic sediments.</title>
        <authorList>
            <person name="Rabus R."/>
            <person name="Ruepp A."/>
            <person name="Frickey T."/>
            <person name="Rattei T."/>
            <person name="Fartmann B."/>
            <person name="Stark M."/>
            <person name="Bauer M."/>
            <person name="Zibat A."/>
            <person name="Lombardot T."/>
            <person name="Becker I."/>
            <person name="Amann J."/>
            <person name="Gellner K."/>
            <person name="Teeling H."/>
            <person name="Leuschner W.D."/>
            <person name="Gloeckner F.-O."/>
            <person name="Lupas A.N."/>
            <person name="Amann R."/>
            <person name="Klenk H.-P."/>
        </authorList>
    </citation>
    <scope>NUCLEOTIDE SEQUENCE [LARGE SCALE GENOMIC DNA]</scope>
    <source>
        <strain>DSM 12343 / LSv54</strain>
    </source>
</reference>